<comment type="function">
    <text evidence="2">Delta(8)-fatty-acid desaturase which introduces a double bond at the 8-position in the long-chain base (LCB) of ceramides. Required for the formation of the di-unsaturated sphingoid base (E,E)-sphinga-4,8-dienine during glucosylceramide (GluCer) biosynthesis.</text>
</comment>
<comment type="catalytic activity">
    <reaction evidence="2">
        <text>an N-acylsphing-4-enine + 2 Fe(II)-[cytochrome b5] + O2 + 2 H(+) = a (4E,8E)-4-sphinga-4,8-dienine ceramide + 2 Fe(III)-[cytochrome b5] + 2 H2O</text>
        <dbReference type="Rhea" id="RHEA:46280"/>
        <dbReference type="Rhea" id="RHEA-COMP:10438"/>
        <dbReference type="Rhea" id="RHEA-COMP:10439"/>
        <dbReference type="ChEBI" id="CHEBI:15377"/>
        <dbReference type="ChEBI" id="CHEBI:15378"/>
        <dbReference type="ChEBI" id="CHEBI:15379"/>
        <dbReference type="ChEBI" id="CHEBI:29033"/>
        <dbReference type="ChEBI" id="CHEBI:29034"/>
        <dbReference type="ChEBI" id="CHEBI:52639"/>
        <dbReference type="ChEBI" id="CHEBI:85953"/>
        <dbReference type="EC" id="1.14.19.18"/>
    </reaction>
</comment>
<comment type="pathway">
    <text evidence="2">Lipid metabolism; sphingolipid metabolism.</text>
</comment>
<comment type="subcellular location">
    <subcellularLocation>
        <location evidence="3">Membrane</location>
        <topology evidence="3">Multi-pass membrane protein</topology>
    </subcellularLocation>
</comment>
<comment type="domain">
    <text evidence="1">The histidine box domains may contain the active site and/or be involved in metal ion binding.</text>
</comment>
<comment type="similarity">
    <text evidence="5">Belongs to the fatty acid desaturase type 1 family.</text>
</comment>
<organism>
    <name type="scientific">Kluyveromyces lactis (strain ATCC 8585 / CBS 2359 / DSM 70799 / NBRC 1267 / NRRL Y-1140 / WM37)</name>
    <name type="common">Yeast</name>
    <name type="synonym">Candida sphaerica</name>
    <dbReference type="NCBI Taxonomy" id="284590"/>
    <lineage>
        <taxon>Eukaryota</taxon>
        <taxon>Fungi</taxon>
        <taxon>Dikarya</taxon>
        <taxon>Ascomycota</taxon>
        <taxon>Saccharomycotina</taxon>
        <taxon>Saccharomycetes</taxon>
        <taxon>Saccharomycetales</taxon>
        <taxon>Saccharomycetaceae</taxon>
        <taxon>Kluyveromyces</taxon>
    </lineage>
</organism>
<feature type="chain" id="PRO_0000418890" description="Delta 8-(E)-sphingolipid desaturase">
    <location>
        <begin position="1"/>
        <end position="573"/>
    </location>
</feature>
<feature type="transmembrane region" description="Helical" evidence="3">
    <location>
        <begin position="228"/>
        <end position="248"/>
    </location>
</feature>
<feature type="transmembrane region" description="Helical" evidence="3">
    <location>
        <begin position="273"/>
        <end position="293"/>
    </location>
</feature>
<feature type="transmembrane region" description="Helical" evidence="3">
    <location>
        <begin position="353"/>
        <end position="372"/>
    </location>
</feature>
<feature type="transmembrane region" description="Helical" evidence="3">
    <location>
        <begin position="393"/>
        <end position="413"/>
    </location>
</feature>
<feature type="transmembrane region" description="Helical" evidence="3">
    <location>
        <begin position="422"/>
        <end position="442"/>
    </location>
</feature>
<feature type="domain" description="Cytochrome b5 heme-binding" evidence="4">
    <location>
        <begin position="2"/>
        <end position="77"/>
    </location>
</feature>
<feature type="short sequence motif" description="Histidine box-1" evidence="5">
    <location>
        <begin position="260"/>
        <end position="264"/>
    </location>
</feature>
<feature type="short sequence motif" description="Histidine box-2" evidence="5">
    <location>
        <begin position="297"/>
        <end position="301"/>
    </location>
</feature>
<feature type="short sequence motif" description="Histidine box-3" evidence="5">
    <location>
        <begin position="481"/>
        <end position="485"/>
    </location>
</feature>
<feature type="binding site" description="axial binding residue" evidence="4">
    <location>
        <position position="37"/>
    </location>
    <ligand>
        <name>heme</name>
        <dbReference type="ChEBI" id="CHEBI:30413"/>
    </ligand>
    <ligandPart>
        <name>Fe</name>
        <dbReference type="ChEBI" id="CHEBI:18248"/>
    </ligandPart>
</feature>
<feature type="binding site" description="axial binding residue" evidence="4">
    <location>
        <position position="60"/>
    </location>
    <ligand>
        <name>heme</name>
        <dbReference type="ChEBI" id="CHEBI:30413"/>
    </ligand>
    <ligandPart>
        <name>Fe</name>
        <dbReference type="ChEBI" id="CHEBI:18248"/>
    </ligandPart>
</feature>
<reference key="1">
    <citation type="journal article" date="2004" name="Nature">
        <title>Genome evolution in yeasts.</title>
        <authorList>
            <person name="Dujon B."/>
            <person name="Sherman D."/>
            <person name="Fischer G."/>
            <person name="Durrens P."/>
            <person name="Casaregola S."/>
            <person name="Lafontaine I."/>
            <person name="de Montigny J."/>
            <person name="Marck C."/>
            <person name="Neuveglise C."/>
            <person name="Talla E."/>
            <person name="Goffard N."/>
            <person name="Frangeul L."/>
            <person name="Aigle M."/>
            <person name="Anthouard V."/>
            <person name="Babour A."/>
            <person name="Barbe V."/>
            <person name="Barnay S."/>
            <person name="Blanchin S."/>
            <person name="Beckerich J.-M."/>
            <person name="Beyne E."/>
            <person name="Bleykasten C."/>
            <person name="Boisrame A."/>
            <person name="Boyer J."/>
            <person name="Cattolico L."/>
            <person name="Confanioleri F."/>
            <person name="de Daruvar A."/>
            <person name="Despons L."/>
            <person name="Fabre E."/>
            <person name="Fairhead C."/>
            <person name="Ferry-Dumazet H."/>
            <person name="Groppi A."/>
            <person name="Hantraye F."/>
            <person name="Hennequin C."/>
            <person name="Jauniaux N."/>
            <person name="Joyet P."/>
            <person name="Kachouri R."/>
            <person name="Kerrest A."/>
            <person name="Koszul R."/>
            <person name="Lemaire M."/>
            <person name="Lesur I."/>
            <person name="Ma L."/>
            <person name="Muller H."/>
            <person name="Nicaud J.-M."/>
            <person name="Nikolski M."/>
            <person name="Oztas S."/>
            <person name="Ozier-Kalogeropoulos O."/>
            <person name="Pellenz S."/>
            <person name="Potier S."/>
            <person name="Richard G.-F."/>
            <person name="Straub M.-L."/>
            <person name="Suleau A."/>
            <person name="Swennen D."/>
            <person name="Tekaia F."/>
            <person name="Wesolowski-Louvel M."/>
            <person name="Westhof E."/>
            <person name="Wirth B."/>
            <person name="Zeniou-Meyer M."/>
            <person name="Zivanovic Y."/>
            <person name="Bolotin-Fukuhara M."/>
            <person name="Thierry A."/>
            <person name="Bouchier C."/>
            <person name="Caudron B."/>
            <person name="Scarpelli C."/>
            <person name="Gaillardin C."/>
            <person name="Weissenbach J."/>
            <person name="Wincker P."/>
            <person name="Souciet J.-L."/>
        </authorList>
    </citation>
    <scope>NUCLEOTIDE SEQUENCE [LARGE SCALE GENOMIC DNA]</scope>
    <source>
        <strain>ATCC 8585 / CBS 2359 / DSM 70799 / NBRC 1267 / NRRL Y-1140 / WM37</strain>
    </source>
</reference>
<gene>
    <name evidence="2" type="primary">SLD</name>
    <name type="ordered locus">KLLA0E19471g</name>
</gene>
<protein>
    <recommendedName>
        <fullName evidence="2">Delta 8-(E)-sphingolipid desaturase</fullName>
        <ecNumber evidence="2">1.14.19.18</ecNumber>
    </recommendedName>
</protein>
<proteinExistence type="inferred from homology"/>
<name>SLD1_KLULA</name>
<evidence type="ECO:0000250" key="1"/>
<evidence type="ECO:0000250" key="2">
    <source>
        <dbReference type="UniProtKB" id="Q8NKG8"/>
    </source>
</evidence>
<evidence type="ECO:0000255" key="3"/>
<evidence type="ECO:0000255" key="4">
    <source>
        <dbReference type="PROSITE-ProRule" id="PRU00279"/>
    </source>
</evidence>
<evidence type="ECO:0000305" key="5"/>
<dbReference type="EC" id="1.14.19.18" evidence="2"/>
<dbReference type="EMBL" id="CR382125">
    <property type="protein sequence ID" value="CAG99919.1"/>
    <property type="molecule type" value="Genomic_DNA"/>
</dbReference>
<dbReference type="RefSeq" id="XP_454832.1">
    <property type="nucleotide sequence ID" value="XM_454832.1"/>
</dbReference>
<dbReference type="SMR" id="Q6CMK7"/>
<dbReference type="STRING" id="284590.Q6CMK7"/>
<dbReference type="PaxDb" id="284590-Q6CMK7"/>
<dbReference type="KEGG" id="kla:KLLA0_E19471g"/>
<dbReference type="eggNOG" id="KOG4232">
    <property type="taxonomic scope" value="Eukaryota"/>
</dbReference>
<dbReference type="HOGENOM" id="CLU_016265_3_1_1"/>
<dbReference type="InParanoid" id="Q6CMK7"/>
<dbReference type="OMA" id="LYNCNYF"/>
<dbReference type="UniPathway" id="UPA00222"/>
<dbReference type="Proteomes" id="UP000000598">
    <property type="component" value="Chromosome E"/>
</dbReference>
<dbReference type="GO" id="GO:0016020">
    <property type="term" value="C:membrane"/>
    <property type="evidence" value="ECO:0007669"/>
    <property type="project" value="UniProtKB-SubCell"/>
</dbReference>
<dbReference type="GO" id="GO:0046872">
    <property type="term" value="F:metal ion binding"/>
    <property type="evidence" value="ECO:0007669"/>
    <property type="project" value="UniProtKB-KW"/>
</dbReference>
<dbReference type="GO" id="GO:0016717">
    <property type="term" value="F:oxidoreductase activity, acting on paired donors, with oxidation of a pair of donors resulting in the reduction of molecular oxygen to two molecules of water"/>
    <property type="evidence" value="ECO:0007669"/>
    <property type="project" value="TreeGrafter"/>
</dbReference>
<dbReference type="GO" id="GO:0006665">
    <property type="term" value="P:sphingolipid metabolic process"/>
    <property type="evidence" value="ECO:0007669"/>
    <property type="project" value="UniProtKB-UniPathway"/>
</dbReference>
<dbReference type="CDD" id="cd03506">
    <property type="entry name" value="Delta6-FADS-like"/>
    <property type="match status" value="1"/>
</dbReference>
<dbReference type="Gene3D" id="3.10.120.10">
    <property type="entry name" value="Cytochrome b5-like heme/steroid binding domain"/>
    <property type="match status" value="1"/>
</dbReference>
<dbReference type="InterPro" id="IPR001199">
    <property type="entry name" value="Cyt_B5-like_heme/steroid-bd"/>
</dbReference>
<dbReference type="InterPro" id="IPR036400">
    <property type="entry name" value="Cyt_B5-like_heme/steroid_sf"/>
</dbReference>
<dbReference type="InterPro" id="IPR005804">
    <property type="entry name" value="FA_desaturase_dom"/>
</dbReference>
<dbReference type="InterPro" id="IPR012171">
    <property type="entry name" value="Fatty_acid_desaturase"/>
</dbReference>
<dbReference type="PANTHER" id="PTHR19353:SF30">
    <property type="entry name" value="DELTA 8-(E)-SPHINGOLIPID DESATURASE"/>
    <property type="match status" value="1"/>
</dbReference>
<dbReference type="PANTHER" id="PTHR19353">
    <property type="entry name" value="FATTY ACID DESATURASE 2"/>
    <property type="match status" value="1"/>
</dbReference>
<dbReference type="Pfam" id="PF00173">
    <property type="entry name" value="Cyt-b5"/>
    <property type="match status" value="1"/>
</dbReference>
<dbReference type="Pfam" id="PF00487">
    <property type="entry name" value="FA_desaturase"/>
    <property type="match status" value="1"/>
</dbReference>
<dbReference type="PIRSF" id="PIRSF015921">
    <property type="entry name" value="FA_sphinglp_des"/>
    <property type="match status" value="1"/>
</dbReference>
<dbReference type="SMART" id="SM01117">
    <property type="entry name" value="Cyt-b5"/>
    <property type="match status" value="1"/>
</dbReference>
<dbReference type="SUPFAM" id="SSF55856">
    <property type="entry name" value="Cytochrome b5-like heme/steroid binding domain"/>
    <property type="match status" value="1"/>
</dbReference>
<dbReference type="PROSITE" id="PS50255">
    <property type="entry name" value="CYTOCHROME_B5_2"/>
    <property type="match status" value="1"/>
</dbReference>
<sequence length="573" mass="66992">MSRVLSRRDIADRIAKGQTIVIYEDSVLNLDKWIKFHPGGDKSIYHMIGRDATDEMNAYHDDQTITKFKIWKIGRIDYPWENMLPPIQGGRFSKIDERDDIGDYDINLTSKWRSVDESNQYTKIPKNDRLASEAEVKIYPKIPQGVVPSLDLKEAYEKKIVVDPAIVSENYDNERVYEDLTNFPSLDVKNQEWIASEYRKLHGEITAAGLYQCNYVRYLKEFLRIGTLFGISFYLLSLKWFAISAICLGFAWQQLVFIAHDAGHISITHNYQVDNIIGMTVASWIGGLSLGWWKRNHNVHHLVTNDPVHDPDIQHLPFFAVSTRLFHNVYSTYYDKFLWFDKFAQKVVPIQHYLYYPILCFGRFNLYRLSWMHVLLGQGPRRGKAAWFRYYELAGLSFFNYWFFYLIIYKQMPTNAERFKYVMISHIATMIVHVQITLSHFAMSTSDLGVTESFPMRQLRTSMDVDCPRWLDFFHGGLQFQVIHHLFPRLPRHNLRDAQSLVIKFCDKVGIKYSIYGFAAGNDVVISHLQQIAQQAHTMLECAKTMKKEATDTEFHTNKHVLAANVNEKRKQE</sequence>
<keyword id="KW-0249">Electron transport</keyword>
<keyword id="KW-0349">Heme</keyword>
<keyword id="KW-0408">Iron</keyword>
<keyword id="KW-0443">Lipid metabolism</keyword>
<keyword id="KW-0472">Membrane</keyword>
<keyword id="KW-0479">Metal-binding</keyword>
<keyword id="KW-0560">Oxidoreductase</keyword>
<keyword id="KW-1185">Reference proteome</keyword>
<keyword id="KW-0746">Sphingolipid metabolism</keyword>
<keyword id="KW-0812">Transmembrane</keyword>
<keyword id="KW-1133">Transmembrane helix</keyword>
<keyword id="KW-0813">Transport</keyword>
<accession>Q6CMK7</accession>